<proteinExistence type="inferred from homology"/>
<evidence type="ECO:0000250" key="1">
    <source>
        <dbReference type="UniProtKB" id="Q88P32"/>
    </source>
</evidence>
<evidence type="ECO:0000255" key="2">
    <source>
        <dbReference type="PROSITE-ProRule" id="PRU00390"/>
    </source>
</evidence>
<evidence type="ECO:0000255" key="3">
    <source>
        <dbReference type="PROSITE-ProRule" id="PRU00797"/>
    </source>
</evidence>
<evidence type="ECO:0000305" key="4"/>
<evidence type="ECO:0000312" key="5">
    <source>
        <dbReference type="EMBL" id="AAC38310.1"/>
    </source>
</evidence>
<evidence type="ECO:0000312" key="6">
    <source>
        <dbReference type="EMBL" id="AAG06572.1"/>
    </source>
</evidence>
<dbReference type="EMBL" id="AF029673">
    <property type="protein sequence ID" value="AAC38310.1"/>
    <property type="molecule type" value="Genomic_DNA"/>
</dbReference>
<dbReference type="EMBL" id="AE004091">
    <property type="protein sequence ID" value="AAG06572.1"/>
    <property type="molecule type" value="Genomic_DNA"/>
</dbReference>
<dbReference type="PIR" id="B83248">
    <property type="entry name" value="B83248"/>
</dbReference>
<dbReference type="RefSeq" id="NP_251874.1">
    <property type="nucleotide sequence ID" value="NC_002516.2"/>
</dbReference>
<dbReference type="RefSeq" id="WP_003091466.1">
    <property type="nucleotide sequence ID" value="NZ_QZGE01000023.1"/>
</dbReference>
<dbReference type="SMR" id="O68281"/>
<dbReference type="FunCoup" id="O68281">
    <property type="interactions" value="49"/>
</dbReference>
<dbReference type="STRING" id="208964.PA3184"/>
<dbReference type="PaxDb" id="208964-PA3184"/>
<dbReference type="GeneID" id="882618"/>
<dbReference type="KEGG" id="pae:PA3184"/>
<dbReference type="PATRIC" id="fig|208964.12.peg.3328"/>
<dbReference type="PseudoCAP" id="PA3184"/>
<dbReference type="HOGENOM" id="CLU_055769_0_0_6"/>
<dbReference type="InParanoid" id="O68281"/>
<dbReference type="OrthoDB" id="257751at2"/>
<dbReference type="PhylomeDB" id="O68281"/>
<dbReference type="BioCyc" id="PAER208964:G1FZ6-3244-MONOMER"/>
<dbReference type="Proteomes" id="UP000002438">
    <property type="component" value="Chromosome"/>
</dbReference>
<dbReference type="GO" id="GO:0097367">
    <property type="term" value="F:carbohydrate derivative binding"/>
    <property type="evidence" value="ECO:0007669"/>
    <property type="project" value="InterPro"/>
</dbReference>
<dbReference type="GO" id="GO:0003677">
    <property type="term" value="F:DNA binding"/>
    <property type="evidence" value="ECO:0007669"/>
    <property type="project" value="UniProtKB-KW"/>
</dbReference>
<dbReference type="GO" id="GO:0003700">
    <property type="term" value="F:DNA-binding transcription factor activity"/>
    <property type="evidence" value="ECO:0000318"/>
    <property type="project" value="GO_Central"/>
</dbReference>
<dbReference type="GO" id="GO:1901135">
    <property type="term" value="P:carbohydrate derivative metabolic process"/>
    <property type="evidence" value="ECO:0007669"/>
    <property type="project" value="InterPro"/>
</dbReference>
<dbReference type="GO" id="GO:0006355">
    <property type="term" value="P:regulation of DNA-templated transcription"/>
    <property type="evidence" value="ECO:0000318"/>
    <property type="project" value="GO_Central"/>
</dbReference>
<dbReference type="CDD" id="cd05013">
    <property type="entry name" value="SIS_RpiR"/>
    <property type="match status" value="1"/>
</dbReference>
<dbReference type="FunFam" id="1.10.10.10:FF:000060">
    <property type="entry name" value="DNA-binding transcriptional regulator HexR"/>
    <property type="match status" value="1"/>
</dbReference>
<dbReference type="FunFam" id="3.40.50.10490:FF:000009">
    <property type="entry name" value="DNA-binding transcriptional regulator HexR"/>
    <property type="match status" value="1"/>
</dbReference>
<dbReference type="Gene3D" id="3.40.50.10490">
    <property type="entry name" value="Glucose-6-phosphate isomerase like protein, domain 1"/>
    <property type="match status" value="1"/>
</dbReference>
<dbReference type="Gene3D" id="1.10.10.10">
    <property type="entry name" value="Winged helix-like DNA-binding domain superfamily/Winged helix DNA-binding domain"/>
    <property type="match status" value="1"/>
</dbReference>
<dbReference type="InterPro" id="IPR009057">
    <property type="entry name" value="Homeodomain-like_sf"/>
</dbReference>
<dbReference type="InterPro" id="IPR000281">
    <property type="entry name" value="HTH_RpiR"/>
</dbReference>
<dbReference type="InterPro" id="IPR047640">
    <property type="entry name" value="RpiR-like"/>
</dbReference>
<dbReference type="InterPro" id="IPR035472">
    <property type="entry name" value="RpiR-like_SIS"/>
</dbReference>
<dbReference type="InterPro" id="IPR001347">
    <property type="entry name" value="SIS_dom"/>
</dbReference>
<dbReference type="InterPro" id="IPR046348">
    <property type="entry name" value="SIS_dom_sf"/>
</dbReference>
<dbReference type="InterPro" id="IPR036388">
    <property type="entry name" value="WH-like_DNA-bd_sf"/>
</dbReference>
<dbReference type="NCBIfam" id="NF008451">
    <property type="entry name" value="PRK11302.1"/>
    <property type="match status" value="1"/>
</dbReference>
<dbReference type="PANTHER" id="PTHR30514">
    <property type="entry name" value="GLUCOKINASE"/>
    <property type="match status" value="1"/>
</dbReference>
<dbReference type="PANTHER" id="PTHR30514:SF1">
    <property type="entry name" value="HTH-TYPE TRANSCRIPTIONAL REGULATOR HEXR-RELATED"/>
    <property type="match status" value="1"/>
</dbReference>
<dbReference type="Pfam" id="PF01418">
    <property type="entry name" value="HTH_6"/>
    <property type="match status" value="1"/>
</dbReference>
<dbReference type="Pfam" id="PF01380">
    <property type="entry name" value="SIS"/>
    <property type="match status" value="1"/>
</dbReference>
<dbReference type="SUPFAM" id="SSF46689">
    <property type="entry name" value="Homeodomain-like"/>
    <property type="match status" value="1"/>
</dbReference>
<dbReference type="SUPFAM" id="SSF53697">
    <property type="entry name" value="SIS domain"/>
    <property type="match status" value="1"/>
</dbReference>
<dbReference type="PROSITE" id="PS51071">
    <property type="entry name" value="HTH_RPIR"/>
    <property type="match status" value="1"/>
</dbReference>
<dbReference type="PROSITE" id="PS51464">
    <property type="entry name" value="SIS"/>
    <property type="match status" value="1"/>
</dbReference>
<keyword id="KW-0238">DNA-binding</keyword>
<keyword id="KW-1185">Reference proteome</keyword>
<keyword id="KW-0678">Repressor</keyword>
<keyword id="KW-0804">Transcription</keyword>
<keyword id="KW-0805">Transcription regulation</keyword>
<organism>
    <name type="scientific">Pseudomonas aeruginosa (strain ATCC 15692 / DSM 22644 / CIP 104116 / JCM 14847 / LMG 12228 / 1C / PRS 101 / PAO1)</name>
    <dbReference type="NCBI Taxonomy" id="208964"/>
    <lineage>
        <taxon>Bacteria</taxon>
        <taxon>Pseudomonadati</taxon>
        <taxon>Pseudomonadota</taxon>
        <taxon>Gammaproteobacteria</taxon>
        <taxon>Pseudomonadales</taxon>
        <taxon>Pseudomonadaceae</taxon>
        <taxon>Pseudomonas</taxon>
    </lineage>
</organism>
<comment type="function">
    <text evidence="1">Involved in regulation of glucose metabolism. Transcriptional repressor of the gap-1 gene and of the edd-glk-gltR-2 and zwf-pgl-eda operons. Acts by binding directly to an inverted pseudopalindromic sequence in the promoter region.</text>
</comment>
<accession>O68281</accession>
<accession>Q9HZ53</accession>
<sequence length="285" mass="31170">MKNLLEQIQSRLDELNKAERKVAEVILQNPQQATRFSIAALAQAAAVSEPTVNRFCRSFGMSGYPELKIQLAQSLASGAAFVTQAVAEDDGPEAYTRKIFSNTIASLDSAHKLLDPRVIDRAVDLLIQARQIHFFGLGASASVALDAQHKFFRFNLAVSAQADVLMQRMIASVAHTGDLFVVISYTGRTRELVEVAHLARENGASVLGLTAAGSPLARASTLCLDIPLPEDTDIYMPMTSRIVQLTVLDVLATGVTLRRGVDFQPHLRRIKESLVPTRYPLDEDN</sequence>
<protein>
    <recommendedName>
        <fullName evidence="4">HTH-type transcriptional regulator HexR</fullName>
    </recommendedName>
    <alternativeName>
        <fullName evidence="5">Hex regulon repressor</fullName>
    </alternativeName>
</protein>
<name>HEXR_PSEAE</name>
<feature type="chain" id="PRO_0000068624" description="HTH-type transcriptional regulator HexR">
    <location>
        <begin position="1"/>
        <end position="285"/>
    </location>
</feature>
<feature type="domain" description="HTH rpiR-type" evidence="2">
    <location>
        <begin position="2"/>
        <end position="78"/>
    </location>
</feature>
<feature type="domain" description="SIS" evidence="3">
    <location>
        <begin position="122"/>
        <end position="261"/>
    </location>
</feature>
<feature type="DNA-binding region" description="H-T-H motif" evidence="2">
    <location>
        <begin position="38"/>
        <end position="57"/>
    </location>
</feature>
<feature type="sequence conflict" description="In Ref. 1; AAC38310." evidence="4" ref="1">
    <original>I</original>
    <variation>F</variation>
    <location>
        <position position="104"/>
    </location>
</feature>
<gene>
    <name evidence="5" type="primary">hexR</name>
    <name evidence="6" type="ordered locus">PA3184</name>
</gene>
<reference key="1">
    <citation type="submission" date="1997-10" db="EMBL/GenBank/DDBJ databases">
        <authorList>
            <person name="Hager P.W."/>
            <person name="Dail M.B."/>
            <person name="Phibbs P.V. Jr."/>
        </authorList>
    </citation>
    <scope>NUCLEOTIDE SEQUENCE [GENOMIC DNA]</scope>
    <source>
        <strain>ATCC 15692 / DSM 22644 / CIP 104116 / JCM 14847 / LMG 12228 / 1C / PRS 101 / PAO1</strain>
    </source>
</reference>
<reference key="2">
    <citation type="journal article" date="2000" name="Nature">
        <title>Complete genome sequence of Pseudomonas aeruginosa PAO1, an opportunistic pathogen.</title>
        <authorList>
            <person name="Stover C.K."/>
            <person name="Pham X.-Q.T."/>
            <person name="Erwin A.L."/>
            <person name="Mizoguchi S.D."/>
            <person name="Warrener P."/>
            <person name="Hickey M.J."/>
            <person name="Brinkman F.S.L."/>
            <person name="Hufnagle W.O."/>
            <person name="Kowalik D.J."/>
            <person name="Lagrou M."/>
            <person name="Garber R.L."/>
            <person name="Goltry L."/>
            <person name="Tolentino E."/>
            <person name="Westbrock-Wadman S."/>
            <person name="Yuan Y."/>
            <person name="Brody L.L."/>
            <person name="Coulter S.N."/>
            <person name="Folger K.R."/>
            <person name="Kas A."/>
            <person name="Larbig K."/>
            <person name="Lim R.M."/>
            <person name="Smith K.A."/>
            <person name="Spencer D.H."/>
            <person name="Wong G.K.-S."/>
            <person name="Wu Z."/>
            <person name="Paulsen I.T."/>
            <person name="Reizer J."/>
            <person name="Saier M.H. Jr."/>
            <person name="Hancock R.E.W."/>
            <person name="Lory S."/>
            <person name="Olson M.V."/>
        </authorList>
    </citation>
    <scope>NUCLEOTIDE SEQUENCE [LARGE SCALE GENOMIC DNA]</scope>
    <source>
        <strain>ATCC 15692 / DSM 22644 / CIP 104116 / JCM 14847 / LMG 12228 / 1C / PRS 101 / PAO1</strain>
    </source>
</reference>